<sequence>MSHIIELPEMLANQIAAGEVIERPASVVKELVENAIDAGSSQIIIEIEEAGLKKVQITDNGHGIAHDEVELALRRHATSKIKNQADLFRIRTLGFRGEALPSIASVSVLTLLTAVDGASHGTKLVARGGEVEEVIPATSPVGTKVCVEDLFFNTPARLKYMKSQQAELSHIIDIVNRLGLAHPEISFSLISDGKEMTRTAGTGQLRQAIAGIYGLVSAKKMIEIENSDLDFEISGFVSLPELTRANRNYISLFINGRYIKNFLLNRAILDGFGSKLMVGRFPLAVIHIHIDPYLADVNVHPTKQEVRISKEKELMTLVSEAIANSLKEQTLIPDALENLAKSTVRNREKVEQTILPLKENTLYYEKTEPSRPSQTEVADYQVELTDEGQDLTLFAKETLDRLTKPAKLHFAERKPANYDQLDHPELDLASIDKAYDKLEREEASSFPELEFFGQMHGTYLFAQGRDGLYIIDQHAAQERVKYEEYRESIGNVDQSQQQLLVPYIFEFPADDALRLKERMPLLEEVGVFLAEYGENQFILREHPIWMAEEEIESGIYEMCDMLLLTKEVSIKKYRAELAIMMSCKRSIKANHRIDDHSARQLLYQLSQCDNPYNCPHGRPVLVHFTKSDMEKMFRRIQENHTSLRELGKY</sequence>
<protein>
    <recommendedName>
        <fullName>DNA mismatch repair protein HexB</fullName>
    </recommendedName>
</protein>
<keyword id="KW-0227">DNA damage</keyword>
<keyword id="KW-0234">DNA repair</keyword>
<keyword id="KW-1185">Reference proteome</keyword>
<reference key="1">
    <citation type="journal article" date="2001" name="J. Bacteriol.">
        <title>Genome of the bacterium Streptococcus pneumoniae strain R6.</title>
        <authorList>
            <person name="Hoskins J."/>
            <person name="Alborn W.E. Jr."/>
            <person name="Arnold J."/>
            <person name="Blaszczak L.C."/>
            <person name="Burgett S."/>
            <person name="DeHoff B.S."/>
            <person name="Estrem S.T."/>
            <person name="Fritz L."/>
            <person name="Fu D.-J."/>
            <person name="Fuller W."/>
            <person name="Geringer C."/>
            <person name="Gilmour R."/>
            <person name="Glass J.S."/>
            <person name="Khoja H."/>
            <person name="Kraft A.R."/>
            <person name="Lagace R.E."/>
            <person name="LeBlanc D.J."/>
            <person name="Lee L.N."/>
            <person name="Lefkowitz E.J."/>
            <person name="Lu J."/>
            <person name="Matsushima P."/>
            <person name="McAhren S.M."/>
            <person name="McHenney M."/>
            <person name="McLeaster K."/>
            <person name="Mundy C.W."/>
            <person name="Nicas T.I."/>
            <person name="Norris F.H."/>
            <person name="O'Gara M."/>
            <person name="Peery R.B."/>
            <person name="Robertson G.T."/>
            <person name="Rockey P."/>
            <person name="Sun P.-M."/>
            <person name="Winkler M.E."/>
            <person name="Yang Y."/>
            <person name="Young-Bellido M."/>
            <person name="Zhao G."/>
            <person name="Zook C.A."/>
            <person name="Baltz R.H."/>
            <person name="Jaskunas S.R."/>
            <person name="Rosteck P.R. Jr."/>
            <person name="Skatrud P.L."/>
            <person name="Glass J.I."/>
        </authorList>
    </citation>
    <scope>NUCLEOTIDE SEQUENCE [LARGE SCALE GENOMIC DNA]</scope>
    <source>
        <strain>ATCC BAA-255 / R6</strain>
    </source>
</reference>
<reference key="2">
    <citation type="journal article" date="1999" name="Infect. Immun.">
        <title>Molecular characterization of equine isolates of Streptococcus pneumoniae: natural disruption of genes encoding the virulence factors pneumolysin and autolysin.</title>
        <authorList>
            <person name="Whatmore A.M."/>
            <person name="King S.J."/>
            <person name="Doherty N.C."/>
            <person name="Sturgeon D."/>
            <person name="Chanter N."/>
            <person name="Dowson C.G."/>
        </authorList>
    </citation>
    <scope>NUCLEOTIDE SEQUENCE [GENOMIC DNA] OF 61-156 AND 498-614</scope>
</reference>
<name>HEXB_STRR6</name>
<organism>
    <name type="scientific">Streptococcus pneumoniae (strain ATCC BAA-255 / R6)</name>
    <dbReference type="NCBI Taxonomy" id="171101"/>
    <lineage>
        <taxon>Bacteria</taxon>
        <taxon>Bacillati</taxon>
        <taxon>Bacillota</taxon>
        <taxon>Bacilli</taxon>
        <taxon>Lactobacillales</taxon>
        <taxon>Streptococcaceae</taxon>
        <taxon>Streptococcus</taxon>
    </lineage>
</organism>
<feature type="chain" id="PRO_0000177978" description="DNA mismatch repair protein HexB">
    <location>
        <begin position="1"/>
        <end position="649"/>
    </location>
</feature>
<dbReference type="EMBL" id="AE007317">
    <property type="protein sequence ID" value="AAK98964.1"/>
    <property type="molecule type" value="Genomic_DNA"/>
</dbReference>
<dbReference type="EMBL" id="AJ240647">
    <property type="protein sequence ID" value="CAB39252.1"/>
    <property type="molecule type" value="Genomic_DNA"/>
</dbReference>
<dbReference type="EMBL" id="AJ240648">
    <property type="protein sequence ID" value="CAB39253.1"/>
    <property type="molecule type" value="Genomic_DNA"/>
</dbReference>
<dbReference type="PIR" id="H97891">
    <property type="entry name" value="H97891"/>
</dbReference>
<dbReference type="RefSeq" id="NP_357754.1">
    <property type="nucleotide sequence ID" value="NC_003098.1"/>
</dbReference>
<dbReference type="SMR" id="P0A3R2"/>
<dbReference type="STRING" id="171101.spr0160"/>
<dbReference type="KEGG" id="spr:spr0160"/>
<dbReference type="PATRIC" id="fig|171101.6.peg.189"/>
<dbReference type="eggNOG" id="COG0323">
    <property type="taxonomic scope" value="Bacteria"/>
</dbReference>
<dbReference type="HOGENOM" id="CLU_004131_4_1_9"/>
<dbReference type="Proteomes" id="UP000000586">
    <property type="component" value="Chromosome"/>
</dbReference>
<dbReference type="GO" id="GO:0032300">
    <property type="term" value="C:mismatch repair complex"/>
    <property type="evidence" value="ECO:0000318"/>
    <property type="project" value="GO_Central"/>
</dbReference>
<dbReference type="GO" id="GO:0005524">
    <property type="term" value="F:ATP binding"/>
    <property type="evidence" value="ECO:0007669"/>
    <property type="project" value="InterPro"/>
</dbReference>
<dbReference type="GO" id="GO:0016887">
    <property type="term" value="F:ATP hydrolysis activity"/>
    <property type="evidence" value="ECO:0000318"/>
    <property type="project" value="GO_Central"/>
</dbReference>
<dbReference type="GO" id="GO:0140664">
    <property type="term" value="F:ATP-dependent DNA damage sensor activity"/>
    <property type="evidence" value="ECO:0007669"/>
    <property type="project" value="InterPro"/>
</dbReference>
<dbReference type="GO" id="GO:0030983">
    <property type="term" value="F:mismatched DNA binding"/>
    <property type="evidence" value="ECO:0007669"/>
    <property type="project" value="InterPro"/>
</dbReference>
<dbReference type="GO" id="GO:0006298">
    <property type="term" value="P:mismatch repair"/>
    <property type="evidence" value="ECO:0000318"/>
    <property type="project" value="GO_Central"/>
</dbReference>
<dbReference type="CDD" id="cd16926">
    <property type="entry name" value="HATPase_MutL-MLH-PMS-like"/>
    <property type="match status" value="1"/>
</dbReference>
<dbReference type="CDD" id="cd00782">
    <property type="entry name" value="MutL_Trans"/>
    <property type="match status" value="1"/>
</dbReference>
<dbReference type="FunFam" id="3.30.1370.100:FF:000004">
    <property type="entry name" value="DNA mismatch repair endonuclease MutL"/>
    <property type="match status" value="1"/>
</dbReference>
<dbReference type="FunFam" id="3.30.230.10:FF:000036">
    <property type="entry name" value="DNA mismatch repair endonuclease MutL"/>
    <property type="match status" value="1"/>
</dbReference>
<dbReference type="FunFam" id="3.30.565.10:FF:000003">
    <property type="entry name" value="DNA mismatch repair endonuclease MutL"/>
    <property type="match status" value="1"/>
</dbReference>
<dbReference type="Gene3D" id="3.30.230.10">
    <property type="match status" value="1"/>
</dbReference>
<dbReference type="Gene3D" id="3.30.565.10">
    <property type="entry name" value="Histidine kinase-like ATPase, C-terminal domain"/>
    <property type="match status" value="1"/>
</dbReference>
<dbReference type="Gene3D" id="3.30.1540.20">
    <property type="entry name" value="MutL, C-terminal domain, dimerisation subdomain"/>
    <property type="match status" value="1"/>
</dbReference>
<dbReference type="Gene3D" id="3.30.1370.100">
    <property type="entry name" value="MutL, C-terminal domain, regulatory subdomain"/>
    <property type="match status" value="1"/>
</dbReference>
<dbReference type="HAMAP" id="MF_00149">
    <property type="entry name" value="DNA_mis_repair"/>
    <property type="match status" value="1"/>
</dbReference>
<dbReference type="InterPro" id="IPR014762">
    <property type="entry name" value="DNA_mismatch_repair_CS"/>
</dbReference>
<dbReference type="InterPro" id="IPR020667">
    <property type="entry name" value="DNA_mismatch_repair_MutL"/>
</dbReference>
<dbReference type="InterPro" id="IPR013507">
    <property type="entry name" value="DNA_mismatch_S5_2-like"/>
</dbReference>
<dbReference type="InterPro" id="IPR036890">
    <property type="entry name" value="HATPase_C_sf"/>
</dbReference>
<dbReference type="InterPro" id="IPR002099">
    <property type="entry name" value="MutL/Mlh/PMS"/>
</dbReference>
<dbReference type="InterPro" id="IPR038973">
    <property type="entry name" value="MutL/Mlh/Pms-like"/>
</dbReference>
<dbReference type="InterPro" id="IPR014790">
    <property type="entry name" value="MutL_C"/>
</dbReference>
<dbReference type="InterPro" id="IPR042120">
    <property type="entry name" value="MutL_C_dimsub"/>
</dbReference>
<dbReference type="InterPro" id="IPR042121">
    <property type="entry name" value="MutL_C_regsub"/>
</dbReference>
<dbReference type="InterPro" id="IPR037198">
    <property type="entry name" value="MutL_C_sf"/>
</dbReference>
<dbReference type="InterPro" id="IPR020568">
    <property type="entry name" value="Ribosomal_Su5_D2-typ_SF"/>
</dbReference>
<dbReference type="InterPro" id="IPR014721">
    <property type="entry name" value="Ribsml_uS5_D2-typ_fold_subgr"/>
</dbReference>
<dbReference type="NCBIfam" id="TIGR00585">
    <property type="entry name" value="mutl"/>
    <property type="match status" value="1"/>
</dbReference>
<dbReference type="NCBIfam" id="NF000950">
    <property type="entry name" value="PRK00095.1-3"/>
    <property type="match status" value="1"/>
</dbReference>
<dbReference type="PANTHER" id="PTHR10073">
    <property type="entry name" value="DNA MISMATCH REPAIR PROTEIN MLH, PMS, MUTL"/>
    <property type="match status" value="1"/>
</dbReference>
<dbReference type="PANTHER" id="PTHR10073:SF12">
    <property type="entry name" value="DNA MISMATCH REPAIR PROTEIN MLH1"/>
    <property type="match status" value="1"/>
</dbReference>
<dbReference type="Pfam" id="PF01119">
    <property type="entry name" value="DNA_mis_repair"/>
    <property type="match status" value="1"/>
</dbReference>
<dbReference type="Pfam" id="PF13589">
    <property type="entry name" value="HATPase_c_3"/>
    <property type="match status" value="1"/>
</dbReference>
<dbReference type="Pfam" id="PF08676">
    <property type="entry name" value="MutL_C"/>
    <property type="match status" value="1"/>
</dbReference>
<dbReference type="SMART" id="SM01340">
    <property type="entry name" value="DNA_mis_repair"/>
    <property type="match status" value="1"/>
</dbReference>
<dbReference type="SMART" id="SM00853">
    <property type="entry name" value="MutL_C"/>
    <property type="match status" value="1"/>
</dbReference>
<dbReference type="SUPFAM" id="SSF55874">
    <property type="entry name" value="ATPase domain of HSP90 chaperone/DNA topoisomerase II/histidine kinase"/>
    <property type="match status" value="1"/>
</dbReference>
<dbReference type="SUPFAM" id="SSF118116">
    <property type="entry name" value="DNA mismatch repair protein MutL"/>
    <property type="match status" value="1"/>
</dbReference>
<dbReference type="SUPFAM" id="SSF54211">
    <property type="entry name" value="Ribosomal protein S5 domain 2-like"/>
    <property type="match status" value="1"/>
</dbReference>
<dbReference type="PROSITE" id="PS00058">
    <property type="entry name" value="DNA_MISMATCH_REPAIR_1"/>
    <property type="match status" value="1"/>
</dbReference>
<proteinExistence type="inferred from homology"/>
<accession>P0A3R2</accession>
<accession>P14160</accession>
<accession>Q9R326</accession>
<accession>Q9R3V1</accession>
<accession>Q9Z4T8</accession>
<comment type="function">
    <text>This protein is involved in the repair of mismatches in DNA. The hex system is nick-directed.</text>
</comment>
<comment type="similarity">
    <text evidence="1">Belongs to the DNA mismatch repair MutL/HexB family.</text>
</comment>
<gene>
    <name type="primary">hexB</name>
    <name type="ordered locus">spr0160</name>
</gene>
<evidence type="ECO:0000305" key="1"/>